<proteinExistence type="inferred from homology"/>
<feature type="chain" id="PRO_1000097902" description="Elongation factor P--(R)-beta-lysine ligase">
    <location>
        <begin position="1"/>
        <end position="325"/>
    </location>
</feature>
<feature type="binding site" evidence="1">
    <location>
        <begin position="76"/>
        <end position="78"/>
    </location>
    <ligand>
        <name>substrate</name>
    </ligand>
</feature>
<feature type="binding site" evidence="1">
    <location>
        <begin position="100"/>
        <end position="102"/>
    </location>
    <ligand>
        <name>ATP</name>
        <dbReference type="ChEBI" id="CHEBI:30616"/>
    </ligand>
</feature>
<feature type="binding site" evidence="1">
    <location>
        <position position="109"/>
    </location>
    <ligand>
        <name>ATP</name>
        <dbReference type="ChEBI" id="CHEBI:30616"/>
    </ligand>
</feature>
<feature type="binding site" evidence="1">
    <location>
        <position position="118"/>
    </location>
    <ligand>
        <name>substrate</name>
    </ligand>
</feature>
<feature type="binding site" evidence="1">
    <location>
        <begin position="244"/>
        <end position="245"/>
    </location>
    <ligand>
        <name>ATP</name>
        <dbReference type="ChEBI" id="CHEBI:30616"/>
    </ligand>
</feature>
<feature type="binding site" evidence="1">
    <location>
        <position position="251"/>
    </location>
    <ligand>
        <name>substrate</name>
    </ligand>
</feature>
<feature type="binding site" evidence="1">
    <location>
        <position position="300"/>
    </location>
    <ligand>
        <name>ATP</name>
        <dbReference type="ChEBI" id="CHEBI:30616"/>
    </ligand>
</feature>
<protein>
    <recommendedName>
        <fullName evidence="1">Elongation factor P--(R)-beta-lysine ligase</fullName>
        <shortName evidence="1">EF-P--(R)-beta-lysine ligase</shortName>
        <ecNumber evidence="1">6.3.2.-</ecNumber>
    </recommendedName>
    <alternativeName>
        <fullName evidence="1">EF-P post-translational modification enzyme A</fullName>
    </alternativeName>
    <alternativeName>
        <fullName evidence="1">EF-P-lysine lysyltransferase</fullName>
    </alternativeName>
</protein>
<name>EPMA_KLEP3</name>
<sequence>MSETATWQPSAPIPNLLKRAAVMAEIRRFFTDRGVLEVETPCMSQATVTDIHLFPFETRFVGPGHSQGLNLYLMTSPEYHMKRLLAAGCGPVFQLCRSFRNEEMGRHHNPEFTMLEWYRPCYDMYRLINEVDDLLQQVLECQPAESLSYQQAFQRHLDIDPLSADKTQLREVAAKLDLSNIADTEEDRDTLLQLLFTMGVEPHIGKDRPTFIYHFPATQASLAQISPEDHRVAERFEVYYKGIELANGFHELTDAREQRLRFEQDNRKRAARGLPQQPIDNNLLAALEAGLPDCSGVALGVDRVVMLALGAESIGEVIAFTVDRA</sequence>
<comment type="function">
    <text evidence="1">With EpmB is involved in the beta-lysylation step of the post-translational modification of translation elongation factor P (EF-P). Catalyzes the ATP-dependent activation of (R)-beta-lysine produced by EpmB, forming a lysyl-adenylate, from which the beta-lysyl moiety is then transferred to the epsilon-amino group of a conserved specific lysine residue in EF-P.</text>
</comment>
<comment type="catalytic activity">
    <reaction evidence="1">
        <text>D-beta-lysine + L-lysyl-[protein] + ATP = N(6)-((3R)-3,6-diaminohexanoyl)-L-lysyl-[protein] + AMP + diphosphate + H(+)</text>
        <dbReference type="Rhea" id="RHEA:83435"/>
        <dbReference type="Rhea" id="RHEA-COMP:9752"/>
        <dbReference type="Rhea" id="RHEA-COMP:20131"/>
        <dbReference type="ChEBI" id="CHEBI:15378"/>
        <dbReference type="ChEBI" id="CHEBI:29969"/>
        <dbReference type="ChEBI" id="CHEBI:30616"/>
        <dbReference type="ChEBI" id="CHEBI:33019"/>
        <dbReference type="ChEBI" id="CHEBI:84138"/>
        <dbReference type="ChEBI" id="CHEBI:156053"/>
        <dbReference type="ChEBI" id="CHEBI:456215"/>
    </reaction>
    <physiologicalReaction direction="left-to-right" evidence="1">
        <dbReference type="Rhea" id="RHEA:83436"/>
    </physiologicalReaction>
</comment>
<comment type="subunit">
    <text evidence="1">Homodimer.</text>
</comment>
<comment type="similarity">
    <text evidence="1">Belongs to the class-II aminoacyl-tRNA synthetase family. EpmA subfamily.</text>
</comment>
<gene>
    <name evidence="1" type="primary">epmA</name>
    <name type="synonym">yjeA</name>
    <name type="ordered locus">KPK_5114</name>
</gene>
<accession>B5Y345</accession>
<keyword id="KW-0067">ATP-binding</keyword>
<keyword id="KW-0436">Ligase</keyword>
<keyword id="KW-0547">Nucleotide-binding</keyword>
<reference key="1">
    <citation type="journal article" date="2008" name="PLoS Genet.">
        <title>Complete genome sequence of the N2-fixing broad host range endophyte Klebsiella pneumoniae 342 and virulence predictions verified in mice.</title>
        <authorList>
            <person name="Fouts D.E."/>
            <person name="Tyler H.L."/>
            <person name="DeBoy R.T."/>
            <person name="Daugherty S."/>
            <person name="Ren Q."/>
            <person name="Badger J.H."/>
            <person name="Durkin A.S."/>
            <person name="Huot H."/>
            <person name="Shrivastava S."/>
            <person name="Kothari S."/>
            <person name="Dodson R.J."/>
            <person name="Mohamoud Y."/>
            <person name="Khouri H."/>
            <person name="Roesch L.F.W."/>
            <person name="Krogfelt K.A."/>
            <person name="Struve C."/>
            <person name="Triplett E.W."/>
            <person name="Methe B.A."/>
        </authorList>
    </citation>
    <scope>NUCLEOTIDE SEQUENCE [LARGE SCALE GENOMIC DNA]</scope>
    <source>
        <strain>342</strain>
    </source>
</reference>
<organism>
    <name type="scientific">Klebsiella pneumoniae (strain 342)</name>
    <dbReference type="NCBI Taxonomy" id="507522"/>
    <lineage>
        <taxon>Bacteria</taxon>
        <taxon>Pseudomonadati</taxon>
        <taxon>Pseudomonadota</taxon>
        <taxon>Gammaproteobacteria</taxon>
        <taxon>Enterobacterales</taxon>
        <taxon>Enterobacteriaceae</taxon>
        <taxon>Klebsiella/Raoultella group</taxon>
        <taxon>Klebsiella</taxon>
        <taxon>Klebsiella pneumoniae complex</taxon>
    </lineage>
</organism>
<evidence type="ECO:0000255" key="1">
    <source>
        <dbReference type="HAMAP-Rule" id="MF_00174"/>
    </source>
</evidence>
<dbReference type="EC" id="6.3.2.-" evidence="1"/>
<dbReference type="EMBL" id="CP000964">
    <property type="protein sequence ID" value="ACI11575.1"/>
    <property type="molecule type" value="Genomic_DNA"/>
</dbReference>
<dbReference type="SMR" id="B5Y345"/>
<dbReference type="KEGG" id="kpe:KPK_5114"/>
<dbReference type="HOGENOM" id="CLU_008255_1_1_6"/>
<dbReference type="Proteomes" id="UP000001734">
    <property type="component" value="Chromosome"/>
</dbReference>
<dbReference type="GO" id="GO:0005829">
    <property type="term" value="C:cytosol"/>
    <property type="evidence" value="ECO:0007669"/>
    <property type="project" value="TreeGrafter"/>
</dbReference>
<dbReference type="GO" id="GO:0016880">
    <property type="term" value="F:acid-ammonia (or amide) ligase activity"/>
    <property type="evidence" value="ECO:0007669"/>
    <property type="project" value="UniProtKB-UniRule"/>
</dbReference>
<dbReference type="GO" id="GO:0005524">
    <property type="term" value="F:ATP binding"/>
    <property type="evidence" value="ECO:0007669"/>
    <property type="project" value="UniProtKB-UniRule"/>
</dbReference>
<dbReference type="GO" id="GO:0004824">
    <property type="term" value="F:lysine-tRNA ligase activity"/>
    <property type="evidence" value="ECO:0007669"/>
    <property type="project" value="InterPro"/>
</dbReference>
<dbReference type="GO" id="GO:0000049">
    <property type="term" value="F:tRNA binding"/>
    <property type="evidence" value="ECO:0007669"/>
    <property type="project" value="TreeGrafter"/>
</dbReference>
<dbReference type="GO" id="GO:0006430">
    <property type="term" value="P:lysyl-tRNA aminoacylation"/>
    <property type="evidence" value="ECO:0007669"/>
    <property type="project" value="InterPro"/>
</dbReference>
<dbReference type="FunFam" id="3.30.930.10:FF:000017">
    <property type="entry name" value="Elongation factor P--(R)-beta-lysine ligase"/>
    <property type="match status" value="1"/>
</dbReference>
<dbReference type="Gene3D" id="3.30.930.10">
    <property type="entry name" value="Bira Bifunctional Protein, Domain 2"/>
    <property type="match status" value="1"/>
</dbReference>
<dbReference type="HAMAP" id="MF_00174">
    <property type="entry name" value="EF_P_modif_A"/>
    <property type="match status" value="1"/>
</dbReference>
<dbReference type="InterPro" id="IPR004364">
    <property type="entry name" value="Aa-tRNA-synt_II"/>
</dbReference>
<dbReference type="InterPro" id="IPR006195">
    <property type="entry name" value="aa-tRNA-synth_II"/>
</dbReference>
<dbReference type="InterPro" id="IPR045864">
    <property type="entry name" value="aa-tRNA-synth_II/BPL/LPL"/>
</dbReference>
<dbReference type="InterPro" id="IPR004525">
    <property type="entry name" value="EpmA"/>
</dbReference>
<dbReference type="InterPro" id="IPR018149">
    <property type="entry name" value="Lys-tRNA-synth_II_C"/>
</dbReference>
<dbReference type="NCBIfam" id="TIGR00462">
    <property type="entry name" value="genX"/>
    <property type="match status" value="1"/>
</dbReference>
<dbReference type="NCBIfam" id="NF006828">
    <property type="entry name" value="PRK09350.1"/>
    <property type="match status" value="1"/>
</dbReference>
<dbReference type="PANTHER" id="PTHR42918:SF6">
    <property type="entry name" value="ELONGATION FACTOR P--(R)-BETA-LYSINE LIGASE"/>
    <property type="match status" value="1"/>
</dbReference>
<dbReference type="PANTHER" id="PTHR42918">
    <property type="entry name" value="LYSYL-TRNA SYNTHETASE"/>
    <property type="match status" value="1"/>
</dbReference>
<dbReference type="Pfam" id="PF00152">
    <property type="entry name" value="tRNA-synt_2"/>
    <property type="match status" value="1"/>
</dbReference>
<dbReference type="PRINTS" id="PR00982">
    <property type="entry name" value="TRNASYNTHLYS"/>
</dbReference>
<dbReference type="SUPFAM" id="SSF55681">
    <property type="entry name" value="Class II aaRS and biotin synthetases"/>
    <property type="match status" value="1"/>
</dbReference>
<dbReference type="PROSITE" id="PS50862">
    <property type="entry name" value="AA_TRNA_LIGASE_II"/>
    <property type="match status" value="1"/>
</dbReference>